<gene>
    <name evidence="3" type="ordered locus">Rv2133c</name>
</gene>
<accession>O06242</accession>
<accession>F2GKI5</accession>
<accession>I6XDE9</accession>
<accession>Q7D7H2</accession>
<comment type="sequence caution" evidence="1">
    <conflict type="erroneous initiation">
        <sequence resource="EMBL-CDS" id="CCP44908"/>
    </conflict>
    <text>Truncated N-terminus.</text>
</comment>
<keyword id="KW-0903">Direct protein sequencing</keyword>
<keyword id="KW-1185">Reference proteome</keyword>
<evidence type="ECO:0000269" key="1">
    <source>
    </source>
</evidence>
<evidence type="ECO:0000305" key="2"/>
<evidence type="ECO:0000312" key="3">
    <source>
        <dbReference type="EMBL" id="CCP44908.1"/>
    </source>
</evidence>
<evidence type="ECO:0007744" key="4">
    <source>
    </source>
</evidence>
<proteinExistence type="evidence at protein level"/>
<name>Y2133_MYCTU</name>
<organism>
    <name type="scientific">Mycobacterium tuberculosis (strain ATCC 25618 / H37Rv)</name>
    <dbReference type="NCBI Taxonomy" id="83332"/>
    <lineage>
        <taxon>Bacteria</taxon>
        <taxon>Bacillati</taxon>
        <taxon>Actinomycetota</taxon>
        <taxon>Actinomycetes</taxon>
        <taxon>Mycobacteriales</taxon>
        <taxon>Mycobacteriaceae</taxon>
        <taxon>Mycobacterium</taxon>
        <taxon>Mycobacterium tuberculosis complex</taxon>
    </lineage>
</organism>
<dbReference type="EMBL" id="AL123456">
    <property type="protein sequence ID" value="CCP44908.1"/>
    <property type="status" value="ALT_INIT"/>
    <property type="molecule type" value="Genomic_DNA"/>
</dbReference>
<dbReference type="RefSeq" id="NP_216649.1">
    <property type="nucleotide sequence ID" value="NC_000962.3"/>
</dbReference>
<dbReference type="RefSeq" id="WP_003411101.1">
    <property type="nucleotide sequence ID" value="NC_000962.3"/>
</dbReference>
<dbReference type="SMR" id="O06242"/>
<dbReference type="STRING" id="83332.Rv2133c"/>
<dbReference type="PaxDb" id="83332-Rv2133c"/>
<dbReference type="DNASU" id="887616"/>
<dbReference type="GeneID" id="887616"/>
<dbReference type="KEGG" id="mtu:Rv2133c"/>
<dbReference type="PATRIC" id="fig|83332.111.peg.2377"/>
<dbReference type="TubercuList" id="Rv2133c"/>
<dbReference type="eggNOG" id="COG5032">
    <property type="taxonomic scope" value="Bacteria"/>
</dbReference>
<dbReference type="InParanoid" id="O06242"/>
<dbReference type="OrthoDB" id="3423180at2"/>
<dbReference type="PhylomeDB" id="O06242"/>
<dbReference type="Proteomes" id="UP000001584">
    <property type="component" value="Chromosome"/>
</dbReference>
<dbReference type="InterPro" id="IPR022292">
    <property type="entry name" value="CHP03843"/>
</dbReference>
<dbReference type="NCBIfam" id="TIGR03843">
    <property type="entry name" value="SCO1664 family protein"/>
    <property type="match status" value="1"/>
</dbReference>
<feature type="chain" id="PRO_0000456390" description="Protein Rv2133c">
    <location>
        <begin position="1"/>
        <end position="278"/>
    </location>
</feature>
<reference evidence="3" key="1">
    <citation type="journal article" date="1998" name="Nature">
        <title>Deciphering the biology of Mycobacterium tuberculosis from the complete genome sequence.</title>
        <authorList>
            <person name="Cole S.T."/>
            <person name="Brosch R."/>
            <person name="Parkhill J."/>
            <person name="Garnier T."/>
            <person name="Churcher C.M."/>
            <person name="Harris D.E."/>
            <person name="Gordon S.V."/>
            <person name="Eiglmeier K."/>
            <person name="Gas S."/>
            <person name="Barry C.E. III"/>
            <person name="Tekaia F."/>
            <person name="Badcock K."/>
            <person name="Basham D."/>
            <person name="Brown D."/>
            <person name="Chillingworth T."/>
            <person name="Connor R."/>
            <person name="Davies R.M."/>
            <person name="Devlin K."/>
            <person name="Feltwell T."/>
            <person name="Gentles S."/>
            <person name="Hamlin N."/>
            <person name="Holroyd S."/>
            <person name="Hornsby T."/>
            <person name="Jagels K."/>
            <person name="Krogh A."/>
            <person name="McLean J."/>
            <person name="Moule S."/>
            <person name="Murphy L.D."/>
            <person name="Oliver S."/>
            <person name="Osborne J."/>
            <person name="Quail M.A."/>
            <person name="Rajandream M.A."/>
            <person name="Rogers J."/>
            <person name="Rutter S."/>
            <person name="Seeger K."/>
            <person name="Skelton S."/>
            <person name="Squares S."/>
            <person name="Squares R."/>
            <person name="Sulston J.E."/>
            <person name="Taylor K."/>
            <person name="Whitehead S."/>
            <person name="Barrell B.G."/>
        </authorList>
    </citation>
    <scope>NUCLEOTIDE SEQUENCE [LARGE SCALE GENOMIC DNA]</scope>
    <source>
        <strain>ATCC 25618 / H37Rv</strain>
    </source>
</reference>
<reference key="2">
    <citation type="journal article" date="2022" name="Genomics">
        <title>Deep N-terminomics of Mycobacterium tuberculosis H37Rv extensively correct annotated encoding genes.</title>
        <authorList>
            <person name="Shi J."/>
            <person name="Meng S."/>
            <person name="Wan L."/>
            <person name="Zhang Z."/>
            <person name="Jiang S."/>
            <person name="Zhu H."/>
            <person name="Dai E."/>
            <person name="Chang L."/>
            <person name="Gao H."/>
            <person name="Wan K."/>
            <person name="Zhang L."/>
            <person name="Zhao X."/>
            <person name="Liu H."/>
            <person name="Lyu Z."/>
            <person name="Zhang Y."/>
            <person name="Xu P."/>
        </authorList>
    </citation>
    <scope>PROTEIN SEQUENCE OF 9-30</scope>
    <scope>SEQUENCE REVISION TO N-TERMINUS</scope>
    <source>
        <strain>H37Rv</strain>
    </source>
</reference>
<reference evidence="4" key="3">
    <citation type="journal article" date="2011" name="Mol. Cell. Proteomics">
        <title>Proteogenomic analysis of Mycobacterium tuberculosis by high resolution mass spectrometry.</title>
        <authorList>
            <person name="Kelkar D.S."/>
            <person name="Kumar D."/>
            <person name="Kumar P."/>
            <person name="Balakrishnan L."/>
            <person name="Muthusamy B."/>
            <person name="Yadav A.K."/>
            <person name="Shrivastava P."/>
            <person name="Marimuthu A."/>
            <person name="Anand S."/>
            <person name="Sundaram H."/>
            <person name="Kingsbury R."/>
            <person name="Harsha H.C."/>
            <person name="Nair B."/>
            <person name="Prasad T.S."/>
            <person name="Chauhan D.S."/>
            <person name="Katoch K."/>
            <person name="Katoch V.M."/>
            <person name="Kumar P."/>
            <person name="Chaerkady R."/>
            <person name="Ramachandran S."/>
            <person name="Dash D."/>
            <person name="Pandey A."/>
        </authorList>
    </citation>
    <scope>IDENTIFICATION BY MASS SPECTROMETRY [LARGE SCALE ANALYSIS]</scope>
</reference>
<sequence length="278" mass="30020">MCCSGLAMTLRDDEHAVLADGELTVLGRIRSASNATFLCESTLGLRSLHCVYKPVSGERPLWDFPDGTLAGRELSAYLVSTQLGWNLVPHTIIRDGPAGIGMLQLWVQQPGDAVDSDPLPGPDLVDLFPAHRPRPGYLPVLRAYDYAGDEVVLMHADDIRLRRMAVFDVLINNADRKGGHILCGIDGQVYGVDHGLCLHVENKLRTVLWGWAGKPIDDQILQAVAGLADALGGPLAEALAGRIAAAEIGALRRRAQSLLDQPVMPGPNGHRPIPWPAF</sequence>
<protein>
    <recommendedName>
        <fullName evidence="2">Protein Rv2133c</fullName>
    </recommendedName>
</protein>